<accession>Q38VW6</accession>
<name>POTA_LATSS</name>
<evidence type="ECO:0000255" key="1">
    <source>
        <dbReference type="HAMAP-Rule" id="MF_01726"/>
    </source>
</evidence>
<keyword id="KW-0067">ATP-binding</keyword>
<keyword id="KW-1003">Cell membrane</keyword>
<keyword id="KW-0472">Membrane</keyword>
<keyword id="KW-0547">Nucleotide-binding</keyword>
<keyword id="KW-1185">Reference proteome</keyword>
<keyword id="KW-1278">Translocase</keyword>
<keyword id="KW-0813">Transport</keyword>
<organism>
    <name type="scientific">Latilactobacillus sakei subsp. sakei (strain 23K)</name>
    <name type="common">Lactobacillus sakei subsp. sakei</name>
    <dbReference type="NCBI Taxonomy" id="314315"/>
    <lineage>
        <taxon>Bacteria</taxon>
        <taxon>Bacillati</taxon>
        <taxon>Bacillota</taxon>
        <taxon>Bacilli</taxon>
        <taxon>Lactobacillales</taxon>
        <taxon>Lactobacillaceae</taxon>
        <taxon>Latilactobacillus</taxon>
    </lineage>
</organism>
<reference key="1">
    <citation type="journal article" date="2005" name="Nat. Biotechnol.">
        <title>The complete genome sequence of the meat-borne lactic acid bacterium Lactobacillus sakei 23K.</title>
        <authorList>
            <person name="Chaillou S."/>
            <person name="Champomier-Verges M.-C."/>
            <person name="Cornet M."/>
            <person name="Crutz-Le Coq A.-M."/>
            <person name="Dudez A.-M."/>
            <person name="Martin V."/>
            <person name="Beaufils S."/>
            <person name="Darbon-Rongere E."/>
            <person name="Bossy R."/>
            <person name="Loux V."/>
            <person name="Zagorec M."/>
        </authorList>
    </citation>
    <scope>NUCLEOTIDE SEQUENCE [LARGE SCALE GENOMIC DNA]</scope>
    <source>
        <strain>23K</strain>
    </source>
</reference>
<feature type="chain" id="PRO_0000286234" description="Spermidine/putrescine import ATP-binding protein PotA">
    <location>
        <begin position="1"/>
        <end position="363"/>
    </location>
</feature>
<feature type="domain" description="ABC transporter" evidence="1">
    <location>
        <begin position="6"/>
        <end position="236"/>
    </location>
</feature>
<feature type="binding site" evidence="1">
    <location>
        <begin position="38"/>
        <end position="45"/>
    </location>
    <ligand>
        <name>ATP</name>
        <dbReference type="ChEBI" id="CHEBI:30616"/>
    </ligand>
</feature>
<gene>
    <name evidence="1" type="primary">potA</name>
    <name type="ordered locus">LCA_1363</name>
</gene>
<protein>
    <recommendedName>
        <fullName evidence="1">Spermidine/putrescine import ATP-binding protein PotA</fullName>
        <ecNumber evidence="1">7.6.2.11</ecNumber>
    </recommendedName>
</protein>
<comment type="function">
    <text evidence="1">Part of the ABC transporter complex PotABCD involved in spermidine/putrescine import. Responsible for energy coupling to the transport system.</text>
</comment>
<comment type="catalytic activity">
    <reaction evidence="1">
        <text>ATP + H2O + polyamine-[polyamine-binding protein]Side 1 = ADP + phosphate + polyamineSide 2 + [polyamine-binding protein]Side 1.</text>
        <dbReference type="EC" id="7.6.2.11"/>
    </reaction>
</comment>
<comment type="subunit">
    <text evidence="1">The complex is composed of two ATP-binding proteins (PotA), two transmembrane proteins (PotB and PotC) and a solute-binding protein (PotD).</text>
</comment>
<comment type="subcellular location">
    <subcellularLocation>
        <location evidence="1">Cell membrane</location>
        <topology evidence="1">Peripheral membrane protein</topology>
    </subcellularLocation>
</comment>
<comment type="similarity">
    <text evidence="1">Belongs to the ABC transporter superfamily. Spermidine/putrescine importer (TC 3.A.1.11.1) family.</text>
</comment>
<proteinExistence type="inferred from homology"/>
<dbReference type="EC" id="7.6.2.11" evidence="1"/>
<dbReference type="EMBL" id="CR936503">
    <property type="protein sequence ID" value="CAI55667.1"/>
    <property type="molecule type" value="Genomic_DNA"/>
</dbReference>
<dbReference type="RefSeq" id="WP_011375058.1">
    <property type="nucleotide sequence ID" value="NC_007576.1"/>
</dbReference>
<dbReference type="SMR" id="Q38VW6"/>
<dbReference type="STRING" id="314315.LCA_1363"/>
<dbReference type="KEGG" id="lsa:LCA_1363"/>
<dbReference type="eggNOG" id="COG3842">
    <property type="taxonomic scope" value="Bacteria"/>
</dbReference>
<dbReference type="HOGENOM" id="CLU_000604_1_1_9"/>
<dbReference type="OrthoDB" id="9790614at2"/>
<dbReference type="Proteomes" id="UP000002707">
    <property type="component" value="Chromosome"/>
</dbReference>
<dbReference type="GO" id="GO:0043190">
    <property type="term" value="C:ATP-binding cassette (ABC) transporter complex"/>
    <property type="evidence" value="ECO:0007669"/>
    <property type="project" value="InterPro"/>
</dbReference>
<dbReference type="GO" id="GO:0015594">
    <property type="term" value="F:ABC-type putrescine transporter activity"/>
    <property type="evidence" value="ECO:0007669"/>
    <property type="project" value="InterPro"/>
</dbReference>
<dbReference type="GO" id="GO:0005524">
    <property type="term" value="F:ATP binding"/>
    <property type="evidence" value="ECO:0007669"/>
    <property type="project" value="UniProtKB-KW"/>
</dbReference>
<dbReference type="GO" id="GO:0016887">
    <property type="term" value="F:ATP hydrolysis activity"/>
    <property type="evidence" value="ECO:0007669"/>
    <property type="project" value="InterPro"/>
</dbReference>
<dbReference type="CDD" id="cd03300">
    <property type="entry name" value="ABC_PotA_N"/>
    <property type="match status" value="1"/>
</dbReference>
<dbReference type="FunFam" id="3.40.50.300:FF:000425">
    <property type="entry name" value="Probable ABC transporter, ATP-binding subunit"/>
    <property type="match status" value="1"/>
</dbReference>
<dbReference type="Gene3D" id="2.40.50.100">
    <property type="match status" value="1"/>
</dbReference>
<dbReference type="Gene3D" id="3.40.50.300">
    <property type="entry name" value="P-loop containing nucleotide triphosphate hydrolases"/>
    <property type="match status" value="1"/>
</dbReference>
<dbReference type="InterPro" id="IPR003593">
    <property type="entry name" value="AAA+_ATPase"/>
</dbReference>
<dbReference type="InterPro" id="IPR050093">
    <property type="entry name" value="ABC_SmlMolc_Importer"/>
</dbReference>
<dbReference type="InterPro" id="IPR003439">
    <property type="entry name" value="ABC_transporter-like_ATP-bd"/>
</dbReference>
<dbReference type="InterPro" id="IPR017871">
    <property type="entry name" value="ABC_transporter-like_CS"/>
</dbReference>
<dbReference type="InterPro" id="IPR008995">
    <property type="entry name" value="Mo/tungstate-bd_C_term_dom"/>
</dbReference>
<dbReference type="InterPro" id="IPR027417">
    <property type="entry name" value="P-loop_NTPase"/>
</dbReference>
<dbReference type="InterPro" id="IPR017879">
    <property type="entry name" value="PotA_ATP-bd"/>
</dbReference>
<dbReference type="InterPro" id="IPR013611">
    <property type="entry name" value="Transp-assoc_OB_typ2"/>
</dbReference>
<dbReference type="PANTHER" id="PTHR42781">
    <property type="entry name" value="SPERMIDINE/PUTRESCINE IMPORT ATP-BINDING PROTEIN POTA"/>
    <property type="match status" value="1"/>
</dbReference>
<dbReference type="PANTHER" id="PTHR42781:SF4">
    <property type="entry name" value="SPERMIDINE_PUTRESCINE IMPORT ATP-BINDING PROTEIN POTA"/>
    <property type="match status" value="1"/>
</dbReference>
<dbReference type="Pfam" id="PF00005">
    <property type="entry name" value="ABC_tran"/>
    <property type="match status" value="1"/>
</dbReference>
<dbReference type="Pfam" id="PF08402">
    <property type="entry name" value="TOBE_2"/>
    <property type="match status" value="1"/>
</dbReference>
<dbReference type="SMART" id="SM00382">
    <property type="entry name" value="AAA"/>
    <property type="match status" value="1"/>
</dbReference>
<dbReference type="SUPFAM" id="SSF50331">
    <property type="entry name" value="MOP-like"/>
    <property type="match status" value="1"/>
</dbReference>
<dbReference type="SUPFAM" id="SSF52540">
    <property type="entry name" value="P-loop containing nucleoside triphosphate hydrolases"/>
    <property type="match status" value="1"/>
</dbReference>
<dbReference type="PROSITE" id="PS00211">
    <property type="entry name" value="ABC_TRANSPORTER_1"/>
    <property type="match status" value="1"/>
</dbReference>
<dbReference type="PROSITE" id="PS50893">
    <property type="entry name" value="ABC_TRANSPORTER_2"/>
    <property type="match status" value="1"/>
</dbReference>
<dbReference type="PROSITE" id="PS51305">
    <property type="entry name" value="POTA"/>
    <property type="match status" value="1"/>
</dbReference>
<sequence>MQQPMVEFKNVIKKYDDNQILKGIDMALEKGKFYTLLGPSGCGKTTILRIIAGFTNASSGDVLFEGKRMNDLPANKRQVNTVFQDYALFPHLNVFDNVAFGLNLRKVKKSDVEKKVIEALKLVRLGGYEHREISELSGGQQQRVAIARALANEPKVLLLDEPLSALDMKLRKAMQYELRDLQQRLGITFLFVTHDQEEALAMSDEIFVMNEGNVLQSGTPVDIYDEPINHFVADFIGESNILPGKMVADYQVEIVGKVFECADAGMKPNEAVEIVLRPEDLDIVAVNQGQLVVTVDTQLFRGDYYEITAYDDDRNRWLIHSTNPAKDGQQVGLFFEPEDVHVMRFGESEEDFDARLESYEEED</sequence>